<accession>Q5HGM7</accession>
<gene>
    <name evidence="1" type="primary">pyrE</name>
    <name type="ordered locus">SACOL1217</name>
</gene>
<feature type="chain" id="PRO_0000110736" description="Orotate phosphoribosyltransferase">
    <location>
        <begin position="1"/>
        <end position="203"/>
    </location>
</feature>
<feature type="binding site" evidence="1">
    <location>
        <position position="94"/>
    </location>
    <ligand>
        <name>5-phospho-alpha-D-ribose 1-diphosphate</name>
        <dbReference type="ChEBI" id="CHEBI:58017"/>
        <note>ligand shared between dimeric partners</note>
    </ligand>
</feature>
<feature type="binding site" evidence="1">
    <location>
        <position position="98"/>
    </location>
    <ligand>
        <name>5-phospho-alpha-D-ribose 1-diphosphate</name>
        <dbReference type="ChEBI" id="CHEBI:58017"/>
        <note>ligand shared between dimeric partners</note>
    </ligand>
</feature>
<feature type="binding site" evidence="1">
    <location>
        <position position="100"/>
    </location>
    <ligand>
        <name>5-phospho-alpha-D-ribose 1-diphosphate</name>
        <dbReference type="ChEBI" id="CHEBI:58017"/>
        <note>ligand shared between dimeric partners</note>
    </ligand>
</feature>
<feature type="binding site" description="in other chain" evidence="1">
    <location>
        <begin position="120"/>
        <end position="128"/>
    </location>
    <ligand>
        <name>5-phospho-alpha-D-ribose 1-diphosphate</name>
        <dbReference type="ChEBI" id="CHEBI:58017"/>
        <note>ligand shared between dimeric partners</note>
    </ligand>
</feature>
<feature type="binding site" evidence="1">
    <location>
        <position position="124"/>
    </location>
    <ligand>
        <name>orotate</name>
        <dbReference type="ChEBI" id="CHEBI:30839"/>
    </ligand>
</feature>
<dbReference type="EC" id="2.4.2.10" evidence="1"/>
<dbReference type="EMBL" id="CP000046">
    <property type="protein sequence ID" value="AAW38054.1"/>
    <property type="molecule type" value="Genomic_DNA"/>
</dbReference>
<dbReference type="RefSeq" id="WP_001040245.1">
    <property type="nucleotide sequence ID" value="NZ_JBGOFO010000002.1"/>
</dbReference>
<dbReference type="SMR" id="Q5HGM7"/>
<dbReference type="KEGG" id="sac:SACOL1217"/>
<dbReference type="HOGENOM" id="CLU_074878_1_1_9"/>
<dbReference type="UniPathway" id="UPA00070">
    <property type="reaction ID" value="UER00119"/>
</dbReference>
<dbReference type="Proteomes" id="UP000000530">
    <property type="component" value="Chromosome"/>
</dbReference>
<dbReference type="GO" id="GO:0000287">
    <property type="term" value="F:magnesium ion binding"/>
    <property type="evidence" value="ECO:0007669"/>
    <property type="project" value="UniProtKB-UniRule"/>
</dbReference>
<dbReference type="GO" id="GO:0004588">
    <property type="term" value="F:orotate phosphoribosyltransferase activity"/>
    <property type="evidence" value="ECO:0007669"/>
    <property type="project" value="UniProtKB-UniRule"/>
</dbReference>
<dbReference type="GO" id="GO:0044205">
    <property type="term" value="P:'de novo' UMP biosynthetic process"/>
    <property type="evidence" value="ECO:0007669"/>
    <property type="project" value="UniProtKB-UniRule"/>
</dbReference>
<dbReference type="GO" id="GO:0019856">
    <property type="term" value="P:pyrimidine nucleobase biosynthetic process"/>
    <property type="evidence" value="ECO:0007669"/>
    <property type="project" value="TreeGrafter"/>
</dbReference>
<dbReference type="CDD" id="cd06223">
    <property type="entry name" value="PRTases_typeI"/>
    <property type="match status" value="1"/>
</dbReference>
<dbReference type="Gene3D" id="3.40.50.2020">
    <property type="match status" value="1"/>
</dbReference>
<dbReference type="HAMAP" id="MF_01208">
    <property type="entry name" value="PyrE"/>
    <property type="match status" value="1"/>
</dbReference>
<dbReference type="InterPro" id="IPR023031">
    <property type="entry name" value="OPRT"/>
</dbReference>
<dbReference type="InterPro" id="IPR004467">
    <property type="entry name" value="Or_phspho_trans_dom"/>
</dbReference>
<dbReference type="InterPro" id="IPR000836">
    <property type="entry name" value="PRibTrfase_dom"/>
</dbReference>
<dbReference type="InterPro" id="IPR029057">
    <property type="entry name" value="PRTase-like"/>
</dbReference>
<dbReference type="NCBIfam" id="TIGR00336">
    <property type="entry name" value="pyrE"/>
    <property type="match status" value="1"/>
</dbReference>
<dbReference type="PANTHER" id="PTHR19278">
    <property type="entry name" value="OROTATE PHOSPHORIBOSYLTRANSFERASE"/>
    <property type="match status" value="1"/>
</dbReference>
<dbReference type="PANTHER" id="PTHR19278:SF9">
    <property type="entry name" value="URIDINE 5'-MONOPHOSPHATE SYNTHASE"/>
    <property type="match status" value="1"/>
</dbReference>
<dbReference type="Pfam" id="PF00156">
    <property type="entry name" value="Pribosyltran"/>
    <property type="match status" value="1"/>
</dbReference>
<dbReference type="SUPFAM" id="SSF53271">
    <property type="entry name" value="PRTase-like"/>
    <property type="match status" value="1"/>
</dbReference>
<dbReference type="PROSITE" id="PS00103">
    <property type="entry name" value="PUR_PYR_PR_TRANSFER"/>
    <property type="match status" value="1"/>
</dbReference>
<comment type="function">
    <text evidence="1">Catalyzes the transfer of a ribosyl phosphate group from 5-phosphoribose 1-diphosphate to orotate, leading to the formation of orotidine monophosphate (OMP).</text>
</comment>
<comment type="catalytic activity">
    <reaction evidence="1">
        <text>orotidine 5'-phosphate + diphosphate = orotate + 5-phospho-alpha-D-ribose 1-diphosphate</text>
        <dbReference type="Rhea" id="RHEA:10380"/>
        <dbReference type="ChEBI" id="CHEBI:30839"/>
        <dbReference type="ChEBI" id="CHEBI:33019"/>
        <dbReference type="ChEBI" id="CHEBI:57538"/>
        <dbReference type="ChEBI" id="CHEBI:58017"/>
        <dbReference type="EC" id="2.4.2.10"/>
    </reaction>
</comment>
<comment type="cofactor">
    <cofactor evidence="1">
        <name>Mg(2+)</name>
        <dbReference type="ChEBI" id="CHEBI:18420"/>
    </cofactor>
</comment>
<comment type="pathway">
    <text evidence="1">Pyrimidine metabolism; UMP biosynthesis via de novo pathway; UMP from orotate: step 1/2.</text>
</comment>
<comment type="subunit">
    <text evidence="1">Homodimer.</text>
</comment>
<comment type="similarity">
    <text evidence="1">Belongs to the purine/pyrimidine phosphoribosyltransferase family. PyrE subfamily.</text>
</comment>
<sequence>MAKEIAKSLLDIEAVTLSPNDLYTWSSGIKSPIYCDNRVTLGYPLVRGAIRDGLINLIKEHFPEVEVISGTATAGIPHAAFIAEKLKLPMNYVRSSNKSHGKQNQIEGAKSEGKKVVVIEDLISTGGSSVTAVEALKLAGAEVLGVVAIFTYGLKKADDTFSNIQLPFYTLSDYNELIEVAENEGKISSEDIQTLVEWRDNLA</sequence>
<evidence type="ECO:0000255" key="1">
    <source>
        <dbReference type="HAMAP-Rule" id="MF_01208"/>
    </source>
</evidence>
<organism>
    <name type="scientific">Staphylococcus aureus (strain COL)</name>
    <dbReference type="NCBI Taxonomy" id="93062"/>
    <lineage>
        <taxon>Bacteria</taxon>
        <taxon>Bacillati</taxon>
        <taxon>Bacillota</taxon>
        <taxon>Bacilli</taxon>
        <taxon>Bacillales</taxon>
        <taxon>Staphylococcaceae</taxon>
        <taxon>Staphylococcus</taxon>
    </lineage>
</organism>
<keyword id="KW-0328">Glycosyltransferase</keyword>
<keyword id="KW-0460">Magnesium</keyword>
<keyword id="KW-0665">Pyrimidine biosynthesis</keyword>
<keyword id="KW-0808">Transferase</keyword>
<name>PYRE_STAAC</name>
<reference key="1">
    <citation type="journal article" date="2005" name="J. Bacteriol.">
        <title>Insights on evolution of virulence and resistance from the complete genome analysis of an early methicillin-resistant Staphylococcus aureus strain and a biofilm-producing methicillin-resistant Staphylococcus epidermidis strain.</title>
        <authorList>
            <person name="Gill S.R."/>
            <person name="Fouts D.E."/>
            <person name="Archer G.L."/>
            <person name="Mongodin E.F."/>
            <person name="DeBoy R.T."/>
            <person name="Ravel J."/>
            <person name="Paulsen I.T."/>
            <person name="Kolonay J.F."/>
            <person name="Brinkac L.M."/>
            <person name="Beanan M.J."/>
            <person name="Dodson R.J."/>
            <person name="Daugherty S.C."/>
            <person name="Madupu R."/>
            <person name="Angiuoli S.V."/>
            <person name="Durkin A.S."/>
            <person name="Haft D.H."/>
            <person name="Vamathevan J.J."/>
            <person name="Khouri H."/>
            <person name="Utterback T.R."/>
            <person name="Lee C."/>
            <person name="Dimitrov G."/>
            <person name="Jiang L."/>
            <person name="Qin H."/>
            <person name="Weidman J."/>
            <person name="Tran K."/>
            <person name="Kang K.H."/>
            <person name="Hance I.R."/>
            <person name="Nelson K.E."/>
            <person name="Fraser C.M."/>
        </authorList>
    </citation>
    <scope>NUCLEOTIDE SEQUENCE [LARGE SCALE GENOMIC DNA]</scope>
    <source>
        <strain>COL</strain>
    </source>
</reference>
<protein>
    <recommendedName>
        <fullName evidence="1">Orotate phosphoribosyltransferase</fullName>
        <shortName evidence="1">OPRT</shortName>
        <shortName evidence="1">OPRTase</shortName>
        <ecNumber evidence="1">2.4.2.10</ecNumber>
    </recommendedName>
</protein>
<proteinExistence type="inferred from homology"/>